<dbReference type="EC" id="2.7.11.1"/>
<dbReference type="EMBL" id="AAFI02000224">
    <property type="protein sequence ID" value="EAL60478.1"/>
    <property type="molecule type" value="Genomic_DNA"/>
</dbReference>
<dbReference type="RefSeq" id="XP_628868.1">
    <property type="nucleotide sequence ID" value="XM_628866.1"/>
</dbReference>
<dbReference type="SMR" id="Q54B48"/>
<dbReference type="PaxDb" id="44689-DDB0231281"/>
<dbReference type="EnsemblProtists" id="EAL60478">
    <property type="protein sequence ID" value="EAL60478"/>
    <property type="gene ID" value="DDB_G0293958"/>
</dbReference>
<dbReference type="GeneID" id="8629484"/>
<dbReference type="KEGG" id="ddi:DDB_G0293958"/>
<dbReference type="dictyBase" id="DDB_G0293958"/>
<dbReference type="VEuPathDB" id="AmoebaDB:DDB_G0293958"/>
<dbReference type="eggNOG" id="KOG0595">
    <property type="taxonomic scope" value="Eukaryota"/>
</dbReference>
<dbReference type="eggNOG" id="KOG0615">
    <property type="taxonomic scope" value="Eukaryota"/>
</dbReference>
<dbReference type="HOGENOM" id="CLU_252337_0_0_1"/>
<dbReference type="InParanoid" id="Q54B48"/>
<dbReference type="OMA" id="CENNEAF"/>
<dbReference type="PhylomeDB" id="Q54B48"/>
<dbReference type="PRO" id="PR:Q54B48"/>
<dbReference type="Proteomes" id="UP000002195">
    <property type="component" value="Chromosome 6"/>
</dbReference>
<dbReference type="GO" id="GO:0005524">
    <property type="term" value="F:ATP binding"/>
    <property type="evidence" value="ECO:0007669"/>
    <property type="project" value="UniProtKB-KW"/>
</dbReference>
<dbReference type="GO" id="GO:0106310">
    <property type="term" value="F:protein serine kinase activity"/>
    <property type="evidence" value="ECO:0007669"/>
    <property type="project" value="RHEA"/>
</dbReference>
<dbReference type="GO" id="GO:0004674">
    <property type="term" value="F:protein serine/threonine kinase activity"/>
    <property type="evidence" value="ECO:0000318"/>
    <property type="project" value="GO_Central"/>
</dbReference>
<dbReference type="CDD" id="cd00180">
    <property type="entry name" value="PKc"/>
    <property type="match status" value="1"/>
</dbReference>
<dbReference type="Gene3D" id="1.10.510.10">
    <property type="entry name" value="Transferase(Phosphotransferase) domain 1"/>
    <property type="match status" value="2"/>
</dbReference>
<dbReference type="InterPro" id="IPR011009">
    <property type="entry name" value="Kinase-like_dom_sf"/>
</dbReference>
<dbReference type="InterPro" id="IPR000719">
    <property type="entry name" value="Prot_kinase_dom"/>
</dbReference>
<dbReference type="InterPro" id="IPR008271">
    <property type="entry name" value="Ser/Thr_kinase_AS"/>
</dbReference>
<dbReference type="PANTHER" id="PTHR24363">
    <property type="entry name" value="SERINE/THREONINE PROTEIN KINASE"/>
    <property type="match status" value="1"/>
</dbReference>
<dbReference type="PANTHER" id="PTHR24363:SF0">
    <property type="entry name" value="SERINE_THREONINE KINASE LIKE DOMAIN CONTAINING 1"/>
    <property type="match status" value="1"/>
</dbReference>
<dbReference type="Pfam" id="PF00069">
    <property type="entry name" value="Pkinase"/>
    <property type="match status" value="2"/>
</dbReference>
<dbReference type="SMART" id="SM00220">
    <property type="entry name" value="S_TKc"/>
    <property type="match status" value="2"/>
</dbReference>
<dbReference type="SUPFAM" id="SSF56112">
    <property type="entry name" value="Protein kinase-like (PK-like)"/>
    <property type="match status" value="2"/>
</dbReference>
<dbReference type="PROSITE" id="PS50011">
    <property type="entry name" value="PROTEIN_KINASE_DOM"/>
    <property type="match status" value="2"/>
</dbReference>
<dbReference type="PROSITE" id="PS00108">
    <property type="entry name" value="PROTEIN_KINASE_ST"/>
    <property type="match status" value="2"/>
</dbReference>
<keyword id="KW-0067">ATP-binding</keyword>
<keyword id="KW-0175">Coiled coil</keyword>
<keyword id="KW-0418">Kinase</keyword>
<keyword id="KW-0547">Nucleotide-binding</keyword>
<keyword id="KW-1185">Reference proteome</keyword>
<keyword id="KW-0677">Repeat</keyword>
<keyword id="KW-0723">Serine/threonine-protein kinase</keyword>
<keyword id="KW-0808">Transferase</keyword>
<name>Y3958_DICDI</name>
<sequence>MTGFEIFKKKYQVIQILNEINNNLEERLISIAKDKSGKLCVLKEIKYLNNKKKLEEFKKEEKNEEGIQKRIYQRNFNLEFNHLKNFSQMNHTSIIKYIEHIESKDEFGLVDRCIFVTEYYEDGDLSSIKEIEFKDIINLFLKMLINLKEFQNVIIHRDIKPENIFLRKFKNNDGKVELDCYLGDYGSAQTLYTQNKSTLIGTNQYIAPEVIEKKGHTNLIDIYSLGKTLLSLSKRNTGFVYNRIYLKLFEIMTNPFETRPNVNQLIEFMCRHHENLKYTLLVSDFQHRDSIKCLNYLKEKLIGILDNKTNPLKKIHIDMEFQGKTYHCNGVLRSEYLRNEYILENYPINNNNNNNNNNNNNNNNNNNNNNNNNNNNNNNNNNNNNNNNNNNNNNNNNNNNNNEGEVVQVIELVSTDEKHYSVLEGHINLSESPILNSLSFHDFKVIRGTAPIMHFNDINTSTTGEEEEEEKKDNLKRQNENNQIEQEDKGEKHLKETLNNNNNNNNNNNNNNNNNNNNNNNNSNYNSNRKCLLVLVPMKNHSFRLYKDILKNADETTVEIIQLKAIFHSLLASYLVSLTGVDFALQFLIRGDGINVYFEPPQPSDTTTSNNGEIKLTDYGFKFLFPFKHVSTVYSECNSTYFDIFPQSIPVKNPLVKEIQQFFKDESQTKIPFTTIFQRLISIVLREEYQYKKYKELEYYFEAFNSIDHHYQQLKINNENLVKSEYITRLIDSKEIIKVVNHLTFMPVDDYFFYVVPHNEKVYGIEVYKNFQDIDFFGHAINIIRLSLAILNDHSKHFKFIDAHKDINSSIYYFVYELPPSLASNYKSTSEIQINNKNNNNFYNNNNNNNNNNNNNNNNNNNSNDKSDNENKLLFKQLINQHFNNCIEFINNINTFAREKNPINILLYSMHTIITKNEMNVSSLYYSYMLFGKVNQCIIGSFYDIGKWVYGDQFEKKIKSATFLKNLQYLVWYKMSMISNNHHQVYFSLSNLYSILNEDDKDMMILNLESSLKINENNENEESLPQKLFKLDDIEFGDNFKYSKILIGGICYYILNIKEGDIFKEDQFGLEKKILLLELKQLESGKKYLCFRKQSHQTNTLKELKFNCRTINKKINDEIILEPLFVVEDSNVTFHFYEYKSSFENIKSIESYSKDNSTDYNGIVIIRSLLYYIQYYLSNYKNDDDGSDDDNDNDNNRSLKLVLVNMKDNESLIYLDIQYLIYRLYGVDISLTNEWTKINESLINGTPSLITNFIQTNRNKILNDSICLEILSNELMIKFKPIEIEIQREINHVTSVVSVVDVDVSGNSSKKKFVRKAIGSIIDLKIIGKNYGGIDLSNPRSLGTYNLIGDSVFRNISFFENKKLFEKFDTNVNFQKEIEFVKNYSKFLNFDISNRIPREYSILKSIKGMNGVVQIDSWYLENDIIYILMDYFDGQNLLEVSQDLINDFTLFSILNQLSKILFELETVYSIHHRDLKPDNILIKNDLTICLADFGISHFSKELKNDQDLYYSKDGTLGYQSPEIYSSELRGNGDIKNQPYKMDVFGLRCVMKYLMSKFNSSSSKLKELVEKMGFFNYDDRISLKELIECLNKL</sequence>
<organism>
    <name type="scientific">Dictyostelium discoideum</name>
    <name type="common">Social amoeba</name>
    <dbReference type="NCBI Taxonomy" id="44689"/>
    <lineage>
        <taxon>Eukaryota</taxon>
        <taxon>Amoebozoa</taxon>
        <taxon>Evosea</taxon>
        <taxon>Eumycetozoa</taxon>
        <taxon>Dictyostelia</taxon>
        <taxon>Dictyosteliales</taxon>
        <taxon>Dictyosteliaceae</taxon>
        <taxon>Dictyostelium</taxon>
    </lineage>
</organism>
<comment type="catalytic activity">
    <reaction>
        <text>L-seryl-[protein] + ATP = O-phospho-L-seryl-[protein] + ADP + H(+)</text>
        <dbReference type="Rhea" id="RHEA:17989"/>
        <dbReference type="Rhea" id="RHEA-COMP:9863"/>
        <dbReference type="Rhea" id="RHEA-COMP:11604"/>
        <dbReference type="ChEBI" id="CHEBI:15378"/>
        <dbReference type="ChEBI" id="CHEBI:29999"/>
        <dbReference type="ChEBI" id="CHEBI:30616"/>
        <dbReference type="ChEBI" id="CHEBI:83421"/>
        <dbReference type="ChEBI" id="CHEBI:456216"/>
        <dbReference type="EC" id="2.7.11.1"/>
    </reaction>
</comment>
<comment type="catalytic activity">
    <reaction>
        <text>L-threonyl-[protein] + ATP = O-phospho-L-threonyl-[protein] + ADP + H(+)</text>
        <dbReference type="Rhea" id="RHEA:46608"/>
        <dbReference type="Rhea" id="RHEA-COMP:11060"/>
        <dbReference type="Rhea" id="RHEA-COMP:11605"/>
        <dbReference type="ChEBI" id="CHEBI:15378"/>
        <dbReference type="ChEBI" id="CHEBI:30013"/>
        <dbReference type="ChEBI" id="CHEBI:30616"/>
        <dbReference type="ChEBI" id="CHEBI:61977"/>
        <dbReference type="ChEBI" id="CHEBI:456216"/>
        <dbReference type="EC" id="2.7.11.1"/>
    </reaction>
</comment>
<comment type="similarity">
    <text evidence="3">Belongs to the protein kinase superfamily. Ser/Thr protein kinase family.</text>
</comment>
<protein>
    <recommendedName>
        <fullName>Probable serine/threonine-protein kinase DDB_G0293958</fullName>
        <ecNumber>2.7.11.1</ecNumber>
    </recommendedName>
</protein>
<gene>
    <name type="ORF">DDB_G0293958</name>
</gene>
<accession>Q54B48</accession>
<evidence type="ECO:0000250" key="1"/>
<evidence type="ECO:0000255" key="2"/>
<evidence type="ECO:0000255" key="3">
    <source>
        <dbReference type="PROSITE-ProRule" id="PRU00159"/>
    </source>
</evidence>
<evidence type="ECO:0000256" key="4">
    <source>
        <dbReference type="SAM" id="MobiDB-lite"/>
    </source>
</evidence>
<feature type="chain" id="PRO_0000362053" description="Probable serine/threonine-protein kinase DDB_G0293958">
    <location>
        <begin position="1"/>
        <end position="1592"/>
    </location>
</feature>
<feature type="domain" description="Protein kinase 1" evidence="3">
    <location>
        <begin position="1"/>
        <end position="302"/>
    </location>
</feature>
<feature type="domain" description="Protein kinase 2" evidence="3">
    <location>
        <begin position="1342"/>
        <end position="1592"/>
    </location>
</feature>
<feature type="region of interest" description="Disordered" evidence="4">
    <location>
        <begin position="348"/>
        <end position="402"/>
    </location>
</feature>
<feature type="region of interest" description="Disordered" evidence="4">
    <location>
        <begin position="455"/>
        <end position="526"/>
    </location>
</feature>
<feature type="region of interest" description="Disordered" evidence="4">
    <location>
        <begin position="837"/>
        <end position="867"/>
    </location>
</feature>
<feature type="coiled-coil region" evidence="2">
    <location>
        <begin position="461"/>
        <end position="518"/>
    </location>
</feature>
<feature type="compositionally biased region" description="Low complexity" evidence="4">
    <location>
        <begin position="349"/>
        <end position="402"/>
    </location>
</feature>
<feature type="compositionally biased region" description="Basic and acidic residues" evidence="4">
    <location>
        <begin position="486"/>
        <end position="496"/>
    </location>
</feature>
<feature type="compositionally biased region" description="Low complexity" evidence="4">
    <location>
        <begin position="499"/>
        <end position="526"/>
    </location>
</feature>
<feature type="compositionally biased region" description="Low complexity" evidence="4">
    <location>
        <begin position="837"/>
        <end position="864"/>
    </location>
</feature>
<feature type="active site" description="Proton acceptor" evidence="1">
    <location>
        <position position="158"/>
    </location>
</feature>
<feature type="active site" description="Proton acceptor" evidence="1">
    <location>
        <position position="1474"/>
    </location>
</feature>
<feature type="binding site" evidence="3">
    <location>
        <begin position="2"/>
        <end position="10"/>
    </location>
    <ligand>
        <name>ATP</name>
        <dbReference type="ChEBI" id="CHEBI:30616"/>
    </ligand>
</feature>
<feature type="binding site" evidence="3">
    <location>
        <position position="43"/>
    </location>
    <ligand>
        <name>ATP</name>
        <dbReference type="ChEBI" id="CHEBI:30616"/>
    </ligand>
</feature>
<feature type="binding site" evidence="3">
    <location>
        <begin position="1348"/>
        <end position="1356"/>
    </location>
    <ligand>
        <name>ATP</name>
        <dbReference type="ChEBI" id="CHEBI:30616"/>
    </ligand>
</feature>
<feature type="binding site" evidence="3">
    <location>
        <position position="1376"/>
    </location>
    <ligand>
        <name>ATP</name>
        <dbReference type="ChEBI" id="CHEBI:30616"/>
    </ligand>
</feature>
<reference key="1">
    <citation type="journal article" date="2005" name="Nature">
        <title>The genome of the social amoeba Dictyostelium discoideum.</title>
        <authorList>
            <person name="Eichinger L."/>
            <person name="Pachebat J.A."/>
            <person name="Gloeckner G."/>
            <person name="Rajandream M.A."/>
            <person name="Sucgang R."/>
            <person name="Berriman M."/>
            <person name="Song J."/>
            <person name="Olsen R."/>
            <person name="Szafranski K."/>
            <person name="Xu Q."/>
            <person name="Tunggal B."/>
            <person name="Kummerfeld S."/>
            <person name="Madera M."/>
            <person name="Konfortov B.A."/>
            <person name="Rivero F."/>
            <person name="Bankier A.T."/>
            <person name="Lehmann R."/>
            <person name="Hamlin N."/>
            <person name="Davies R."/>
            <person name="Gaudet P."/>
            <person name="Fey P."/>
            <person name="Pilcher K."/>
            <person name="Chen G."/>
            <person name="Saunders D."/>
            <person name="Sodergren E.J."/>
            <person name="Davis P."/>
            <person name="Kerhornou A."/>
            <person name="Nie X."/>
            <person name="Hall N."/>
            <person name="Anjard C."/>
            <person name="Hemphill L."/>
            <person name="Bason N."/>
            <person name="Farbrother P."/>
            <person name="Desany B."/>
            <person name="Just E."/>
            <person name="Morio T."/>
            <person name="Rost R."/>
            <person name="Churcher C.M."/>
            <person name="Cooper J."/>
            <person name="Haydock S."/>
            <person name="van Driessche N."/>
            <person name="Cronin A."/>
            <person name="Goodhead I."/>
            <person name="Muzny D.M."/>
            <person name="Mourier T."/>
            <person name="Pain A."/>
            <person name="Lu M."/>
            <person name="Harper D."/>
            <person name="Lindsay R."/>
            <person name="Hauser H."/>
            <person name="James K.D."/>
            <person name="Quiles M."/>
            <person name="Madan Babu M."/>
            <person name="Saito T."/>
            <person name="Buchrieser C."/>
            <person name="Wardroper A."/>
            <person name="Felder M."/>
            <person name="Thangavelu M."/>
            <person name="Johnson D."/>
            <person name="Knights A."/>
            <person name="Loulseged H."/>
            <person name="Mungall K.L."/>
            <person name="Oliver K."/>
            <person name="Price C."/>
            <person name="Quail M.A."/>
            <person name="Urushihara H."/>
            <person name="Hernandez J."/>
            <person name="Rabbinowitsch E."/>
            <person name="Steffen D."/>
            <person name="Sanders M."/>
            <person name="Ma J."/>
            <person name="Kohara Y."/>
            <person name="Sharp S."/>
            <person name="Simmonds M.N."/>
            <person name="Spiegler S."/>
            <person name="Tivey A."/>
            <person name="Sugano S."/>
            <person name="White B."/>
            <person name="Walker D."/>
            <person name="Woodward J.R."/>
            <person name="Winckler T."/>
            <person name="Tanaka Y."/>
            <person name="Shaulsky G."/>
            <person name="Schleicher M."/>
            <person name="Weinstock G.M."/>
            <person name="Rosenthal A."/>
            <person name="Cox E.C."/>
            <person name="Chisholm R.L."/>
            <person name="Gibbs R.A."/>
            <person name="Loomis W.F."/>
            <person name="Platzer M."/>
            <person name="Kay R.R."/>
            <person name="Williams J.G."/>
            <person name="Dear P.H."/>
            <person name="Noegel A.A."/>
            <person name="Barrell B.G."/>
            <person name="Kuspa A."/>
        </authorList>
    </citation>
    <scope>NUCLEOTIDE SEQUENCE [LARGE SCALE GENOMIC DNA]</scope>
    <source>
        <strain>AX4</strain>
    </source>
</reference>
<proteinExistence type="inferred from homology"/>